<dbReference type="EC" id="3.2.1.28" evidence="1"/>
<dbReference type="EMBL" id="CP000266">
    <property type="protein sequence ID" value="ABF05601.1"/>
    <property type="molecule type" value="Genomic_DNA"/>
</dbReference>
<dbReference type="RefSeq" id="WP_000934208.1">
    <property type="nucleotide sequence ID" value="NC_008258.1"/>
</dbReference>
<dbReference type="SMR" id="Q0SZB4"/>
<dbReference type="CAZy" id="GH37">
    <property type="family name" value="Glycoside Hydrolase Family 37"/>
</dbReference>
<dbReference type="KEGG" id="sfv:SFV_3570"/>
<dbReference type="HOGENOM" id="CLU_006451_3_1_6"/>
<dbReference type="UniPathway" id="UPA00300">
    <property type="reaction ID" value="UER00535"/>
</dbReference>
<dbReference type="Proteomes" id="UP000000659">
    <property type="component" value="Chromosome"/>
</dbReference>
<dbReference type="GO" id="GO:0005737">
    <property type="term" value="C:cytoplasm"/>
    <property type="evidence" value="ECO:0007669"/>
    <property type="project" value="UniProtKB-SubCell"/>
</dbReference>
<dbReference type="GO" id="GO:0004555">
    <property type="term" value="F:alpha,alpha-trehalase activity"/>
    <property type="evidence" value="ECO:0007669"/>
    <property type="project" value="UniProtKB-UniRule"/>
</dbReference>
<dbReference type="GO" id="GO:0071474">
    <property type="term" value="P:cellular hyperosmotic response"/>
    <property type="evidence" value="ECO:0007669"/>
    <property type="project" value="InterPro"/>
</dbReference>
<dbReference type="GO" id="GO:0005993">
    <property type="term" value="P:trehalose catabolic process"/>
    <property type="evidence" value="ECO:0007669"/>
    <property type="project" value="UniProtKB-UniRule"/>
</dbReference>
<dbReference type="FunFam" id="1.50.10.10:FF:000003">
    <property type="entry name" value="Cytoplasmic trehalase"/>
    <property type="match status" value="1"/>
</dbReference>
<dbReference type="Gene3D" id="1.50.10.10">
    <property type="match status" value="1"/>
</dbReference>
<dbReference type="HAMAP" id="MF_01059">
    <property type="entry name" value="Cyt_trehalase"/>
    <property type="match status" value="1"/>
</dbReference>
<dbReference type="InterPro" id="IPR008928">
    <property type="entry name" value="6-hairpin_glycosidase_sf"/>
</dbReference>
<dbReference type="InterPro" id="IPR012341">
    <property type="entry name" value="6hp_glycosidase-like_sf"/>
</dbReference>
<dbReference type="InterPro" id="IPR023715">
    <property type="entry name" value="Cyt_trehalase"/>
</dbReference>
<dbReference type="InterPro" id="IPR001661">
    <property type="entry name" value="Glyco_hydro_37"/>
</dbReference>
<dbReference type="InterPro" id="IPR018232">
    <property type="entry name" value="Glyco_hydro_37_CS"/>
</dbReference>
<dbReference type="NCBIfam" id="NF009773">
    <property type="entry name" value="PRK13270.1"/>
    <property type="match status" value="1"/>
</dbReference>
<dbReference type="NCBIfam" id="NF009774">
    <property type="entry name" value="PRK13271.1"/>
    <property type="match status" value="1"/>
</dbReference>
<dbReference type="PANTHER" id="PTHR23403:SF8">
    <property type="entry name" value="CYTOPLASMIC TREHALASE"/>
    <property type="match status" value="1"/>
</dbReference>
<dbReference type="PANTHER" id="PTHR23403">
    <property type="entry name" value="TREHALASE"/>
    <property type="match status" value="1"/>
</dbReference>
<dbReference type="Pfam" id="PF01204">
    <property type="entry name" value="Trehalase"/>
    <property type="match status" value="1"/>
</dbReference>
<dbReference type="PRINTS" id="PR00744">
    <property type="entry name" value="GLHYDRLASE37"/>
</dbReference>
<dbReference type="SUPFAM" id="SSF48208">
    <property type="entry name" value="Six-hairpin glycosidases"/>
    <property type="match status" value="1"/>
</dbReference>
<dbReference type="PROSITE" id="PS00927">
    <property type="entry name" value="TREHALASE_1"/>
    <property type="match status" value="1"/>
</dbReference>
<dbReference type="PROSITE" id="PS00928">
    <property type="entry name" value="TREHALASE_2"/>
    <property type="match status" value="1"/>
</dbReference>
<evidence type="ECO:0000255" key="1">
    <source>
        <dbReference type="HAMAP-Rule" id="MF_01059"/>
    </source>
</evidence>
<name>TREF_SHIF8</name>
<feature type="chain" id="PRO_1000064447" description="Cytoplasmic trehalase">
    <location>
        <begin position="1"/>
        <end position="549"/>
    </location>
</feature>
<feature type="active site" description="Proton donor/acceptor" evidence="1">
    <location>
        <position position="326"/>
    </location>
</feature>
<feature type="active site" description="Proton donor/acceptor" evidence="1">
    <location>
        <position position="509"/>
    </location>
</feature>
<feature type="binding site" evidence="1">
    <location>
        <position position="168"/>
    </location>
    <ligand>
        <name>substrate</name>
    </ligand>
</feature>
<feature type="binding site" evidence="1">
    <location>
        <begin position="175"/>
        <end position="176"/>
    </location>
    <ligand>
        <name>substrate</name>
    </ligand>
</feature>
<feature type="binding site" evidence="1">
    <location>
        <position position="212"/>
    </location>
    <ligand>
        <name>substrate</name>
    </ligand>
</feature>
<feature type="binding site" evidence="1">
    <location>
        <begin position="221"/>
        <end position="223"/>
    </location>
    <ligand>
        <name>substrate</name>
    </ligand>
</feature>
<feature type="binding site" evidence="1">
    <location>
        <begin position="292"/>
        <end position="294"/>
    </location>
    <ligand>
        <name>substrate</name>
    </ligand>
</feature>
<feature type="binding site" evidence="1">
    <location>
        <position position="324"/>
    </location>
    <ligand>
        <name>substrate</name>
    </ligand>
</feature>
<feature type="binding site" evidence="1">
    <location>
        <position position="525"/>
    </location>
    <ligand>
        <name>substrate</name>
    </ligand>
</feature>
<proteinExistence type="inferred from homology"/>
<gene>
    <name evidence="1" type="primary">treF</name>
    <name type="ordered locus">SFV_3570</name>
</gene>
<keyword id="KW-0963">Cytoplasm</keyword>
<keyword id="KW-0326">Glycosidase</keyword>
<keyword id="KW-0378">Hydrolase</keyword>
<comment type="function">
    <text evidence="1">Hydrolyzes trehalose to glucose. Could be involved, in cells returning to low osmolarity conditions, in the utilization of the accumulated cytoplasmic trehalose, which was synthesized in response to high osmolarity.</text>
</comment>
<comment type="catalytic activity">
    <reaction evidence="1">
        <text>alpha,alpha-trehalose + H2O = alpha-D-glucose + beta-D-glucose</text>
        <dbReference type="Rhea" id="RHEA:32675"/>
        <dbReference type="ChEBI" id="CHEBI:15377"/>
        <dbReference type="ChEBI" id="CHEBI:15903"/>
        <dbReference type="ChEBI" id="CHEBI:16551"/>
        <dbReference type="ChEBI" id="CHEBI:17925"/>
        <dbReference type="EC" id="3.2.1.28"/>
    </reaction>
</comment>
<comment type="pathway">
    <text evidence="1">Glycan degradation; trehalose degradation; D-glucose from alpha,alpha-trehalose: step 1/1.</text>
</comment>
<comment type="subunit">
    <text evidence="1">Monomer.</text>
</comment>
<comment type="subcellular location">
    <subcellularLocation>
        <location evidence="1">Cytoplasm</location>
    </subcellularLocation>
</comment>
<comment type="similarity">
    <text evidence="1">Belongs to the glycosyl hydrolase 37 family.</text>
</comment>
<sequence>MLNQKIQNPNPDELMIEVDLCYELDPYELKLDEMIEAEPEPEMIEGLPASDALTPADRYLELFEHVQSAKIFPDSKTFPDCAPKMDPLDILIRYRKVRRHRDFDLRKFVENHFWLPEVYSSEYVSDPQNSLKEHIDQLWPVLTREPQDHIPWSSLLALPQSYIVPGGRFSETYYWDSYFTMLGLAESGREDLLKCMADNFAWMIENYGHIPNGNRTYYLSRSQPPVFALMVELFEEDGVRGARRYLDHLKMEYAFWMDGAESLIPNQAYRHVVRMPDGSLLNRYWDDRDTPRDESWLEDVETAKHSGCPPNEVYRDLRAGAASGWDYSSRWLRDTGRLASIRTTQFIPIDLNAFLFKLESAIANISALKGEKETEALFRQKASARRDAVNRYLWDDENGIYRDYDWRREQLALFSAAAIVPLYVGMANHEQADRLANAVRSRLLTPGGILASEYETGEQWDKPNGWAPLQWMAIQGFKMYGDDLLGDEIARSWLKTVNQFYLEQHKMIEKYHIADGVPREGGGGEYPLQDGFGWTNGVVRRLIGLYGEP</sequence>
<accession>Q0SZB4</accession>
<protein>
    <recommendedName>
        <fullName evidence="1">Cytoplasmic trehalase</fullName>
        <ecNumber evidence="1">3.2.1.28</ecNumber>
    </recommendedName>
    <alternativeName>
        <fullName evidence="1">Alpha,alpha-trehalase</fullName>
    </alternativeName>
    <alternativeName>
        <fullName evidence="1">Alpha,alpha-trehalose glucohydrolase</fullName>
    </alternativeName>
</protein>
<reference key="1">
    <citation type="journal article" date="2006" name="BMC Genomics">
        <title>Complete genome sequence of Shigella flexneri 5b and comparison with Shigella flexneri 2a.</title>
        <authorList>
            <person name="Nie H."/>
            <person name="Yang F."/>
            <person name="Zhang X."/>
            <person name="Yang J."/>
            <person name="Chen L."/>
            <person name="Wang J."/>
            <person name="Xiong Z."/>
            <person name="Peng J."/>
            <person name="Sun L."/>
            <person name="Dong J."/>
            <person name="Xue Y."/>
            <person name="Xu X."/>
            <person name="Chen S."/>
            <person name="Yao Z."/>
            <person name="Shen Y."/>
            <person name="Jin Q."/>
        </authorList>
    </citation>
    <scope>NUCLEOTIDE SEQUENCE [LARGE SCALE GENOMIC DNA]</scope>
    <source>
        <strain>8401</strain>
    </source>
</reference>
<organism>
    <name type="scientific">Shigella flexneri serotype 5b (strain 8401)</name>
    <dbReference type="NCBI Taxonomy" id="373384"/>
    <lineage>
        <taxon>Bacteria</taxon>
        <taxon>Pseudomonadati</taxon>
        <taxon>Pseudomonadota</taxon>
        <taxon>Gammaproteobacteria</taxon>
        <taxon>Enterobacterales</taxon>
        <taxon>Enterobacteriaceae</taxon>
        <taxon>Shigella</taxon>
    </lineage>
</organism>